<reference key="1">
    <citation type="journal article" date="2003" name="Proc. Natl. Acad. Sci. U.S.A.">
        <title>The complete genome sequence of Chromobacterium violaceum reveals remarkable and exploitable bacterial adaptability.</title>
        <authorList>
            <person name="Vasconcelos A.T.R."/>
            <person name="de Almeida D.F."/>
            <person name="Hungria M."/>
            <person name="Guimaraes C.T."/>
            <person name="Antonio R.V."/>
            <person name="Almeida F.C."/>
            <person name="de Almeida L.G.P."/>
            <person name="de Almeida R."/>
            <person name="Alves-Gomes J.A."/>
            <person name="Andrade E.M."/>
            <person name="Araripe J."/>
            <person name="de Araujo M.F.F."/>
            <person name="Astolfi-Filho S."/>
            <person name="Azevedo V."/>
            <person name="Baptista A.J."/>
            <person name="Bataus L.A.M."/>
            <person name="Batista J.S."/>
            <person name="Belo A."/>
            <person name="van den Berg C."/>
            <person name="Bogo M."/>
            <person name="Bonatto S."/>
            <person name="Bordignon J."/>
            <person name="Brigido M.M."/>
            <person name="Brito C.A."/>
            <person name="Brocchi M."/>
            <person name="Burity H.A."/>
            <person name="Camargo A.A."/>
            <person name="Cardoso D.D.P."/>
            <person name="Carneiro N.P."/>
            <person name="Carraro D.M."/>
            <person name="Carvalho C.M.B."/>
            <person name="Cascardo J.C.M."/>
            <person name="Cavada B.S."/>
            <person name="Chueire L.M.O."/>
            <person name="Creczynski-Pasa T.B."/>
            <person name="Cunha-Junior N.C."/>
            <person name="Fagundes N."/>
            <person name="Falcao C.L."/>
            <person name="Fantinatti F."/>
            <person name="Farias I.P."/>
            <person name="Felipe M.S.S."/>
            <person name="Ferrari L.P."/>
            <person name="Ferro J.A."/>
            <person name="Ferro M.I.T."/>
            <person name="Franco G.R."/>
            <person name="Freitas N.S.A."/>
            <person name="Furlan L.R."/>
            <person name="Gazzinelli R.T."/>
            <person name="Gomes E.A."/>
            <person name="Goncalves P.R."/>
            <person name="Grangeiro T.B."/>
            <person name="Grattapaglia D."/>
            <person name="Grisard E.C."/>
            <person name="Hanna E.S."/>
            <person name="Jardim S.N."/>
            <person name="Laurino J."/>
            <person name="Leoi L.C.T."/>
            <person name="Lima L.F.A."/>
            <person name="Loureiro M.F."/>
            <person name="Lyra M.C.C.P."/>
            <person name="Madeira H.M.F."/>
            <person name="Manfio G.P."/>
            <person name="Maranhao A.Q."/>
            <person name="Martins W.S."/>
            <person name="di Mauro S.M.Z."/>
            <person name="de Medeiros S.R.B."/>
            <person name="Meissner R.V."/>
            <person name="Moreira M.A.M."/>
            <person name="Nascimento F.F."/>
            <person name="Nicolas M.F."/>
            <person name="Oliveira J.G."/>
            <person name="Oliveira S.C."/>
            <person name="Paixao R.F.C."/>
            <person name="Parente J.A."/>
            <person name="Pedrosa F.O."/>
            <person name="Pena S.D.J."/>
            <person name="Pereira J.O."/>
            <person name="Pereira M."/>
            <person name="Pinto L.S.R.C."/>
            <person name="Pinto L.S."/>
            <person name="Porto J.I.R."/>
            <person name="Potrich D.P."/>
            <person name="Ramalho-Neto C.E."/>
            <person name="Reis A.M.M."/>
            <person name="Rigo L.U."/>
            <person name="Rondinelli E."/>
            <person name="Santos E.B.P."/>
            <person name="Santos F.R."/>
            <person name="Schneider M.P.C."/>
            <person name="Seuanez H.N."/>
            <person name="Silva A.M.R."/>
            <person name="da Silva A.L.C."/>
            <person name="Silva D.W."/>
            <person name="Silva R."/>
            <person name="Simoes I.C."/>
            <person name="Simon D."/>
            <person name="Soares C.M.A."/>
            <person name="Soares R.B.A."/>
            <person name="Souza E.M."/>
            <person name="Souza K.R.L."/>
            <person name="Souza R.C."/>
            <person name="Steffens M.B.R."/>
            <person name="Steindel M."/>
            <person name="Teixeira S.R."/>
            <person name="Urmenyi T."/>
            <person name="Vettore A."/>
            <person name="Wassem R."/>
            <person name="Zaha A."/>
            <person name="Simpson A.J.G."/>
        </authorList>
    </citation>
    <scope>NUCLEOTIDE SEQUENCE [LARGE SCALE GENOMIC DNA]</scope>
    <source>
        <strain>ATCC 12472 / DSM 30191 / JCM 1249 / CCUG 213 / NBRC 12614 / NCIMB 9131 / NCTC 9757 / MK</strain>
    </source>
</reference>
<name>TDH_CHRVO</name>
<evidence type="ECO:0000255" key="1">
    <source>
        <dbReference type="HAMAP-Rule" id="MF_00627"/>
    </source>
</evidence>
<comment type="function">
    <text evidence="1">Catalyzes the NAD(+)-dependent oxidation of L-threonine to 2-amino-3-ketobutyrate.</text>
</comment>
<comment type="catalytic activity">
    <reaction evidence="1">
        <text>L-threonine + NAD(+) = (2S)-2-amino-3-oxobutanoate + NADH + H(+)</text>
        <dbReference type="Rhea" id="RHEA:13161"/>
        <dbReference type="ChEBI" id="CHEBI:15378"/>
        <dbReference type="ChEBI" id="CHEBI:57540"/>
        <dbReference type="ChEBI" id="CHEBI:57926"/>
        <dbReference type="ChEBI" id="CHEBI:57945"/>
        <dbReference type="ChEBI" id="CHEBI:78948"/>
        <dbReference type="EC" id="1.1.1.103"/>
    </reaction>
</comment>
<comment type="cofactor">
    <cofactor evidence="1">
        <name>Zn(2+)</name>
        <dbReference type="ChEBI" id="CHEBI:29105"/>
    </cofactor>
    <text evidence="1">Binds 2 Zn(2+) ions per subunit.</text>
</comment>
<comment type="pathway">
    <text evidence="1">Amino-acid degradation; L-threonine degradation via oxydo-reductase pathway; glycine from L-threonine: step 1/2.</text>
</comment>
<comment type="subunit">
    <text evidence="1">Homotetramer.</text>
</comment>
<comment type="subcellular location">
    <subcellularLocation>
        <location evidence="1">Cytoplasm</location>
    </subcellularLocation>
</comment>
<comment type="similarity">
    <text evidence="1">Belongs to the zinc-containing alcohol dehydrogenase family.</text>
</comment>
<feature type="chain" id="PRO_0000160834" description="L-threonine 3-dehydrogenase">
    <location>
        <begin position="1"/>
        <end position="341"/>
    </location>
</feature>
<feature type="active site" description="Charge relay system" evidence="1">
    <location>
        <position position="40"/>
    </location>
</feature>
<feature type="active site" description="Charge relay system" evidence="1">
    <location>
        <position position="43"/>
    </location>
</feature>
<feature type="binding site" evidence="1">
    <location>
        <position position="38"/>
    </location>
    <ligand>
        <name>Zn(2+)</name>
        <dbReference type="ChEBI" id="CHEBI:29105"/>
        <label>1</label>
        <note>catalytic</note>
    </ligand>
</feature>
<feature type="binding site" evidence="1">
    <location>
        <position position="63"/>
    </location>
    <ligand>
        <name>Zn(2+)</name>
        <dbReference type="ChEBI" id="CHEBI:29105"/>
        <label>1</label>
        <note>catalytic</note>
    </ligand>
</feature>
<feature type="binding site" evidence="1">
    <location>
        <position position="64"/>
    </location>
    <ligand>
        <name>Zn(2+)</name>
        <dbReference type="ChEBI" id="CHEBI:29105"/>
        <label>1</label>
        <note>catalytic</note>
    </ligand>
</feature>
<feature type="binding site" evidence="1">
    <location>
        <position position="93"/>
    </location>
    <ligand>
        <name>Zn(2+)</name>
        <dbReference type="ChEBI" id="CHEBI:29105"/>
        <label>2</label>
    </ligand>
</feature>
<feature type="binding site" evidence="1">
    <location>
        <position position="96"/>
    </location>
    <ligand>
        <name>Zn(2+)</name>
        <dbReference type="ChEBI" id="CHEBI:29105"/>
        <label>2</label>
    </ligand>
</feature>
<feature type="binding site" evidence="1">
    <location>
        <position position="99"/>
    </location>
    <ligand>
        <name>Zn(2+)</name>
        <dbReference type="ChEBI" id="CHEBI:29105"/>
        <label>2</label>
    </ligand>
</feature>
<feature type="binding site" evidence="1">
    <location>
        <position position="107"/>
    </location>
    <ligand>
        <name>Zn(2+)</name>
        <dbReference type="ChEBI" id="CHEBI:29105"/>
        <label>2</label>
    </ligand>
</feature>
<feature type="binding site" evidence="1">
    <location>
        <position position="175"/>
    </location>
    <ligand>
        <name>NAD(+)</name>
        <dbReference type="ChEBI" id="CHEBI:57540"/>
    </ligand>
</feature>
<feature type="binding site" evidence="1">
    <location>
        <position position="195"/>
    </location>
    <ligand>
        <name>NAD(+)</name>
        <dbReference type="ChEBI" id="CHEBI:57540"/>
    </ligand>
</feature>
<feature type="binding site" evidence="1">
    <location>
        <position position="200"/>
    </location>
    <ligand>
        <name>NAD(+)</name>
        <dbReference type="ChEBI" id="CHEBI:57540"/>
    </ligand>
</feature>
<feature type="binding site" evidence="1">
    <location>
        <begin position="262"/>
        <end position="264"/>
    </location>
    <ligand>
        <name>NAD(+)</name>
        <dbReference type="ChEBI" id="CHEBI:57540"/>
    </ligand>
</feature>
<feature type="binding site" evidence="1">
    <location>
        <begin position="286"/>
        <end position="287"/>
    </location>
    <ligand>
        <name>NAD(+)</name>
        <dbReference type="ChEBI" id="CHEBI:57540"/>
    </ligand>
</feature>
<feature type="site" description="Important for catalytic activity for the proton relay mechanism but does not participate directly in the coordination of zinc atom" evidence="1">
    <location>
        <position position="148"/>
    </location>
</feature>
<proteinExistence type="inferred from homology"/>
<sequence>MKALAKLKAAPGLEMTDVPLPEVGHNDLLIKIVKTAICGTDIHIWNWDEWSQKTIPVPMHVGHEYVGVVAGMGSEVQGFKIGQRVSGEGHITCGYCRNCRAGRRHLCRNTTGVGVNREGAFAEYLVIPAFNAFPIPDDISDDLASIFDPFGNAVHTALSFNLVGEDVLITGAGPIGIMAVAIAKHVGARHVVITDVNDYRLELAKKMGATRAVNVAREDLKAVMQELHMSEGFDVGLEMSGNPQAFRQMLETMNHGGKVALLGIPPSNTAIDWNQVIFKGLEIKGIYGREMFETWYKMVALIQSGLDISPIITHHFKVDEFEQGFAAMLSGQSGKVILDWR</sequence>
<dbReference type="EC" id="1.1.1.103" evidence="1"/>
<dbReference type="EMBL" id="AE016825">
    <property type="protein sequence ID" value="AAQ59327.1"/>
    <property type="molecule type" value="Genomic_DNA"/>
</dbReference>
<dbReference type="RefSeq" id="WP_011135203.1">
    <property type="nucleotide sequence ID" value="NC_005085.1"/>
</dbReference>
<dbReference type="SMR" id="Q7NXH5"/>
<dbReference type="STRING" id="243365.CV_1651"/>
<dbReference type="KEGG" id="cvi:CV_1651"/>
<dbReference type="eggNOG" id="COG1063">
    <property type="taxonomic scope" value="Bacteria"/>
</dbReference>
<dbReference type="HOGENOM" id="CLU_026673_11_0_4"/>
<dbReference type="OrthoDB" id="9773078at2"/>
<dbReference type="UniPathway" id="UPA00046">
    <property type="reaction ID" value="UER00505"/>
</dbReference>
<dbReference type="Proteomes" id="UP000001424">
    <property type="component" value="Chromosome"/>
</dbReference>
<dbReference type="GO" id="GO:0005737">
    <property type="term" value="C:cytoplasm"/>
    <property type="evidence" value="ECO:0007669"/>
    <property type="project" value="UniProtKB-SubCell"/>
</dbReference>
<dbReference type="GO" id="GO:0008743">
    <property type="term" value="F:L-threonine 3-dehydrogenase activity"/>
    <property type="evidence" value="ECO:0007669"/>
    <property type="project" value="UniProtKB-UniRule"/>
</dbReference>
<dbReference type="GO" id="GO:0008270">
    <property type="term" value="F:zinc ion binding"/>
    <property type="evidence" value="ECO:0007669"/>
    <property type="project" value="UniProtKB-UniRule"/>
</dbReference>
<dbReference type="GO" id="GO:0019518">
    <property type="term" value="P:L-threonine catabolic process to glycine"/>
    <property type="evidence" value="ECO:0007669"/>
    <property type="project" value="UniProtKB-UniPathway"/>
</dbReference>
<dbReference type="Gene3D" id="3.90.180.10">
    <property type="entry name" value="Medium-chain alcohol dehydrogenases, catalytic domain"/>
    <property type="match status" value="1"/>
</dbReference>
<dbReference type="Gene3D" id="3.40.50.720">
    <property type="entry name" value="NAD(P)-binding Rossmann-like Domain"/>
    <property type="match status" value="1"/>
</dbReference>
<dbReference type="HAMAP" id="MF_00627">
    <property type="entry name" value="Thr_dehydrog"/>
    <property type="match status" value="1"/>
</dbReference>
<dbReference type="InterPro" id="IPR013149">
    <property type="entry name" value="ADH-like_C"/>
</dbReference>
<dbReference type="InterPro" id="IPR013154">
    <property type="entry name" value="ADH-like_N"/>
</dbReference>
<dbReference type="InterPro" id="IPR002328">
    <property type="entry name" value="ADH_Zn_CS"/>
</dbReference>
<dbReference type="InterPro" id="IPR011032">
    <property type="entry name" value="GroES-like_sf"/>
</dbReference>
<dbReference type="InterPro" id="IPR004627">
    <property type="entry name" value="L-Threonine_3-DHase"/>
</dbReference>
<dbReference type="InterPro" id="IPR036291">
    <property type="entry name" value="NAD(P)-bd_dom_sf"/>
</dbReference>
<dbReference type="InterPro" id="IPR020843">
    <property type="entry name" value="PKS_ER"/>
</dbReference>
<dbReference type="InterPro" id="IPR050129">
    <property type="entry name" value="Zn_alcohol_dh"/>
</dbReference>
<dbReference type="NCBIfam" id="NF003808">
    <property type="entry name" value="PRK05396.1"/>
    <property type="match status" value="1"/>
</dbReference>
<dbReference type="NCBIfam" id="TIGR00692">
    <property type="entry name" value="tdh"/>
    <property type="match status" value="1"/>
</dbReference>
<dbReference type="PANTHER" id="PTHR43401">
    <property type="entry name" value="L-THREONINE 3-DEHYDROGENASE"/>
    <property type="match status" value="1"/>
</dbReference>
<dbReference type="PANTHER" id="PTHR43401:SF2">
    <property type="entry name" value="L-THREONINE 3-DEHYDROGENASE"/>
    <property type="match status" value="1"/>
</dbReference>
<dbReference type="Pfam" id="PF08240">
    <property type="entry name" value="ADH_N"/>
    <property type="match status" value="1"/>
</dbReference>
<dbReference type="Pfam" id="PF00107">
    <property type="entry name" value="ADH_zinc_N"/>
    <property type="match status" value="1"/>
</dbReference>
<dbReference type="SMART" id="SM00829">
    <property type="entry name" value="PKS_ER"/>
    <property type="match status" value="1"/>
</dbReference>
<dbReference type="SUPFAM" id="SSF50129">
    <property type="entry name" value="GroES-like"/>
    <property type="match status" value="1"/>
</dbReference>
<dbReference type="SUPFAM" id="SSF51735">
    <property type="entry name" value="NAD(P)-binding Rossmann-fold domains"/>
    <property type="match status" value="1"/>
</dbReference>
<dbReference type="PROSITE" id="PS00059">
    <property type="entry name" value="ADH_ZINC"/>
    <property type="match status" value="1"/>
</dbReference>
<organism>
    <name type="scientific">Chromobacterium violaceum (strain ATCC 12472 / DSM 30191 / JCM 1249 / CCUG 213 / NBRC 12614 / NCIMB 9131 / NCTC 9757 / MK)</name>
    <dbReference type="NCBI Taxonomy" id="243365"/>
    <lineage>
        <taxon>Bacteria</taxon>
        <taxon>Pseudomonadati</taxon>
        <taxon>Pseudomonadota</taxon>
        <taxon>Betaproteobacteria</taxon>
        <taxon>Neisseriales</taxon>
        <taxon>Chromobacteriaceae</taxon>
        <taxon>Chromobacterium</taxon>
    </lineage>
</organism>
<protein>
    <recommendedName>
        <fullName evidence="1">L-threonine 3-dehydrogenase</fullName>
        <shortName evidence="1">TDH</shortName>
        <ecNumber evidence="1">1.1.1.103</ecNumber>
    </recommendedName>
</protein>
<accession>Q7NXH5</accession>
<keyword id="KW-0963">Cytoplasm</keyword>
<keyword id="KW-0479">Metal-binding</keyword>
<keyword id="KW-0520">NAD</keyword>
<keyword id="KW-0560">Oxidoreductase</keyword>
<keyword id="KW-1185">Reference proteome</keyword>
<keyword id="KW-0862">Zinc</keyword>
<gene>
    <name evidence="1" type="primary">tdh</name>
    <name type="ordered locus">CV_1651</name>
</gene>